<comment type="function">
    <text evidence="1 2">Stores iron in a soluble, non-toxic, readily available form. Important for iron homeostasis. Has ferroxidase activity. Iron is taken up in the ferrous form and deposited as ferric hydroxides after oxidation. Also plays a role in delivery of iron to cells. Mediates iron uptake in capsule cells of the developing kidney (By similarity). Delivery to lysosomes is mediated by the cargo receptor NCOA4 for autophagic degradation and release of iron (By similarity).</text>
</comment>
<comment type="catalytic activity">
    <reaction evidence="5">
        <text>4 Fe(2+) + O2 + 4 H(+) = 4 Fe(3+) + 2 H2O</text>
        <dbReference type="Rhea" id="RHEA:11148"/>
        <dbReference type="ChEBI" id="CHEBI:15377"/>
        <dbReference type="ChEBI" id="CHEBI:15378"/>
        <dbReference type="ChEBI" id="CHEBI:15379"/>
        <dbReference type="ChEBI" id="CHEBI:29033"/>
        <dbReference type="ChEBI" id="CHEBI:29034"/>
        <dbReference type="EC" id="1.16.3.1"/>
    </reaction>
</comment>
<comment type="subunit">
    <text evidence="5 7">In liver, forms a heteromer consisting of middle and heavy subunits. The functional molecule forms a roughly spherical shell with a diameter of 12 nm and contains a central cavity into which the insoluble mineral iron core is deposited.</text>
</comment>
<comment type="tissue specificity">
    <text evidence="5">Liver (at protein level).</text>
</comment>
<comment type="similarity">
    <text evidence="3">Belongs to the ferritin family.</text>
</comment>
<proteinExistence type="evidence at protein level"/>
<dbReference type="EC" id="1.16.3.1"/>
<dbReference type="SMR" id="P85837"/>
<dbReference type="GO" id="GO:0005737">
    <property type="term" value="C:cytoplasm"/>
    <property type="evidence" value="ECO:0007669"/>
    <property type="project" value="TreeGrafter"/>
</dbReference>
<dbReference type="GO" id="GO:0008199">
    <property type="term" value="F:ferric iron binding"/>
    <property type="evidence" value="ECO:0007669"/>
    <property type="project" value="InterPro"/>
</dbReference>
<dbReference type="GO" id="GO:0008198">
    <property type="term" value="F:ferrous iron binding"/>
    <property type="evidence" value="ECO:0007669"/>
    <property type="project" value="TreeGrafter"/>
</dbReference>
<dbReference type="GO" id="GO:0004322">
    <property type="term" value="F:ferroxidase activity"/>
    <property type="evidence" value="ECO:0007669"/>
    <property type="project" value="UniProtKB-EC"/>
</dbReference>
<dbReference type="GO" id="GO:0006879">
    <property type="term" value="P:intracellular iron ion homeostasis"/>
    <property type="evidence" value="ECO:0007669"/>
    <property type="project" value="UniProtKB-KW"/>
</dbReference>
<dbReference type="GO" id="GO:0006826">
    <property type="term" value="P:iron ion transport"/>
    <property type="evidence" value="ECO:0007669"/>
    <property type="project" value="InterPro"/>
</dbReference>
<dbReference type="GO" id="GO:0110076">
    <property type="term" value="P:negative regulation of ferroptosis"/>
    <property type="evidence" value="ECO:0000250"/>
    <property type="project" value="UniProtKB"/>
</dbReference>
<dbReference type="CDD" id="cd01056">
    <property type="entry name" value="Euk_Ferritin"/>
    <property type="match status" value="1"/>
</dbReference>
<dbReference type="FunFam" id="1.20.1260.10:FF:000002">
    <property type="entry name" value="Ferritin, mitochondrial"/>
    <property type="match status" value="1"/>
</dbReference>
<dbReference type="Gene3D" id="1.20.1260.10">
    <property type="match status" value="1"/>
</dbReference>
<dbReference type="InterPro" id="IPR001519">
    <property type="entry name" value="Ferritin"/>
</dbReference>
<dbReference type="InterPro" id="IPR012347">
    <property type="entry name" value="Ferritin-like"/>
</dbReference>
<dbReference type="InterPro" id="IPR009040">
    <property type="entry name" value="Ferritin-like_diiron"/>
</dbReference>
<dbReference type="InterPro" id="IPR009078">
    <property type="entry name" value="Ferritin-like_SF"/>
</dbReference>
<dbReference type="InterPro" id="IPR014034">
    <property type="entry name" value="Ferritin_CS"/>
</dbReference>
<dbReference type="InterPro" id="IPR008331">
    <property type="entry name" value="Ferritin_DPS_dom"/>
</dbReference>
<dbReference type="PANTHER" id="PTHR11431">
    <property type="entry name" value="FERRITIN"/>
    <property type="match status" value="1"/>
</dbReference>
<dbReference type="PANTHER" id="PTHR11431:SF37">
    <property type="entry name" value="FERRITIN HEAVY CHAIN"/>
    <property type="match status" value="1"/>
</dbReference>
<dbReference type="Pfam" id="PF00210">
    <property type="entry name" value="Ferritin"/>
    <property type="match status" value="1"/>
</dbReference>
<dbReference type="SUPFAM" id="SSF47240">
    <property type="entry name" value="Ferritin-like"/>
    <property type="match status" value="1"/>
</dbReference>
<dbReference type="PROSITE" id="PS00540">
    <property type="entry name" value="FERRITIN_1"/>
    <property type="match status" value="1"/>
</dbReference>
<dbReference type="PROSITE" id="PS00204">
    <property type="entry name" value="FERRITIN_2"/>
    <property type="match status" value="1"/>
</dbReference>
<dbReference type="PROSITE" id="PS50905">
    <property type="entry name" value="FERRITIN_LIKE"/>
    <property type="match status" value="1"/>
</dbReference>
<keyword id="KW-0903">Direct protein sequencing</keyword>
<keyword id="KW-0408">Iron</keyword>
<keyword id="KW-0409">Iron storage</keyword>
<keyword id="KW-0479">Metal-binding</keyword>
<keyword id="KW-0560">Oxidoreductase</keyword>
<name>FRIH_TRENE</name>
<organism>
    <name type="scientific">Trematomus newnesi</name>
    <name type="common">Dusky notothen</name>
    <dbReference type="NCBI Taxonomy" id="35730"/>
    <lineage>
        <taxon>Eukaryota</taxon>
        <taxon>Metazoa</taxon>
        <taxon>Chordata</taxon>
        <taxon>Craniata</taxon>
        <taxon>Vertebrata</taxon>
        <taxon>Euteleostomi</taxon>
        <taxon>Actinopterygii</taxon>
        <taxon>Neopterygii</taxon>
        <taxon>Teleostei</taxon>
        <taxon>Neoteleostei</taxon>
        <taxon>Acanthomorphata</taxon>
        <taxon>Eupercaria</taxon>
        <taxon>Perciformes</taxon>
        <taxon>Notothenioidei</taxon>
        <taxon>Nototheniidae</taxon>
        <taxon>Trematomus</taxon>
    </lineage>
</organism>
<evidence type="ECO:0000250" key="1"/>
<evidence type="ECO:0000250" key="2">
    <source>
        <dbReference type="UniProtKB" id="P02794"/>
    </source>
</evidence>
<evidence type="ECO:0000255" key="3"/>
<evidence type="ECO:0000255" key="4">
    <source>
        <dbReference type="PROSITE-ProRule" id="PRU00085"/>
    </source>
</evidence>
<evidence type="ECO:0000269" key="5">
    <source>
    </source>
</evidence>
<evidence type="ECO:0000303" key="6">
    <source>
    </source>
</evidence>
<evidence type="ECO:0000305" key="7"/>
<accession>P85837</accession>
<feature type="chain" id="PRO_0000352781" description="Ferritin, heavy subunit">
    <location>
        <begin position="1"/>
        <end position="174"/>
    </location>
</feature>
<feature type="domain" description="Ferritin-like diiron" evidence="4">
    <location>
        <begin position="7"/>
        <end position="156"/>
    </location>
</feature>
<feature type="binding site" evidence="2 4">
    <location>
        <position position="24"/>
    </location>
    <ligand>
        <name>Fe cation</name>
        <dbReference type="ChEBI" id="CHEBI:24875"/>
        <label>1</label>
    </ligand>
</feature>
<feature type="binding site" evidence="2 4">
    <location>
        <position position="59"/>
    </location>
    <ligand>
        <name>Fe cation</name>
        <dbReference type="ChEBI" id="CHEBI:24875"/>
        <label>1</label>
    </ligand>
</feature>
<feature type="binding site" evidence="2 4">
    <location>
        <position position="59"/>
    </location>
    <ligand>
        <name>Fe cation</name>
        <dbReference type="ChEBI" id="CHEBI:24875"/>
        <label>2</label>
    </ligand>
</feature>
<feature type="binding site" evidence="2 4">
    <location>
        <position position="62"/>
    </location>
    <ligand>
        <name>Fe cation</name>
        <dbReference type="ChEBI" id="CHEBI:24875"/>
        <label>1</label>
    </ligand>
</feature>
<feature type="binding site" evidence="2 4">
    <location>
        <position position="104"/>
    </location>
    <ligand>
        <name>Fe cation</name>
        <dbReference type="ChEBI" id="CHEBI:24875"/>
        <label>2</label>
    </ligand>
</feature>
<feature type="binding site" evidence="2 4">
    <location>
        <position position="138"/>
    </location>
    <ligand>
        <name>Fe cation</name>
        <dbReference type="ChEBI" id="CHEBI:24875"/>
        <label>2</label>
    </ligand>
</feature>
<sequence>MESQVRQNFHKDCEAAINRQINLELYASYSYLSMAYYFDRDDVALPGFAHFFKHQSEEEREHAEKLMKQQNQRGGRIFLQDVKKPDRDEWGSGLDALECALQLEKNVNQSLLDLHKVCSEHNDPHMCDFLETHYLDEQVKSIKELGDWVTNLRRLGAPQNGMAEYLFDKHTLGK</sequence>
<reference evidence="7" key="1">
    <citation type="journal article" date="2008" name="Arch. Biochem. Biophys.">
        <title>The unusual co-assembly of H- and M-chains in the ferritin molecule from the Antarctic teleosts Trematomus bernacchii and Trematomus newnesi.</title>
        <authorList>
            <person name="Giorgi A."/>
            <person name="Mignogna G."/>
            <person name="Bellapadrona G."/>
            <person name="Gattoni M."/>
            <person name="Chiaraluce R."/>
            <person name="Consalvi V."/>
            <person name="Chiancone E."/>
            <person name="Stefanini S."/>
        </authorList>
    </citation>
    <scope>PROTEIN SEQUENCE</scope>
    <scope>CATALYTIC ACTIVITY</scope>
    <scope>SUBUNIT</scope>
    <scope>TISSUE SPECIFICITY</scope>
    <source>
        <tissue evidence="5">Liver</tissue>
    </source>
</reference>
<protein>
    <recommendedName>
        <fullName evidence="6">Ferritin, heavy subunit</fullName>
        <shortName evidence="6">Ferritin H</shortName>
        <ecNumber>1.16.3.1</ecNumber>
    </recommendedName>
</protein>